<name>VATA_BORAP</name>
<keyword id="KW-0066">ATP synthesis</keyword>
<keyword id="KW-0067">ATP-binding</keyword>
<keyword id="KW-0375">Hydrogen ion transport</keyword>
<keyword id="KW-0406">Ion transport</keyword>
<keyword id="KW-0547">Nucleotide-binding</keyword>
<keyword id="KW-1278">Translocase</keyword>
<keyword id="KW-0813">Transport</keyword>
<proteinExistence type="inferred from homology"/>
<sequence length="575" mass="64012">MNTKGKVVGVNGNLVTIEVEGSVSMNEVLFVKTGGRNLKAEVIRVRGNEVDAQVFELTKGISVGDLVEFTDKLLTVELGPGLLTQVYDGLQNPLPELAIKCGFFLERGVYLRPLNKDKKWNFKKTSKVGDSVIAGDFLGFVIEGTVHHQIMIPFYKRDSYKIVEIVNDGDYSIDEQIAVIEDDSGMRHSITMSFHWPVKIPITNYKQRLIPSEPMLTQTRIIDTFFPVAKGGTFCIPGPFGAGKTVLQQVTSRNADVDIVIIAACGERAGEVVETLKEFPELIDPKTGKSLMDRTCIICNTSSMPVAAREASVYTAITIGEYYRQMGLDILLLADSTSRWAQAMREMSGRLEEIPGEEAFPAYLESVIASFYERAGIVVLNNGDIGSVTVGGSVSPAGGNFEEPVTQATLKVVGAFHGLTRERSDARKFPAISPLESWSKYKGVIDSKKTEYVRSFLVKGNEINQMMKVVGEEGISNEDFLIYLKSELLDSCYLQQNSFDSIDAAVNSERQNYMFDIVYNILKTNFEFSDKLQARDFINELRQNLLDMNLSSFKDSKFNKLEHTLSELVNFKKVI</sequence>
<reference key="1">
    <citation type="journal article" date="2006" name="BMC Genomics">
        <title>Comparative genome analysis: selection pressure on the Borrelia vls cassettes is essential for infectivity.</title>
        <authorList>
            <person name="Gloeckner G."/>
            <person name="Schulte-Spechtel U."/>
            <person name="Schilhabel M."/>
            <person name="Felder M."/>
            <person name="Suehnel J."/>
            <person name="Wilske B."/>
            <person name="Platzer M."/>
        </authorList>
    </citation>
    <scope>NUCLEOTIDE SEQUENCE [LARGE SCALE GENOMIC DNA]</scope>
    <source>
        <strain>PKo</strain>
    </source>
</reference>
<reference key="2">
    <citation type="journal article" date="2011" name="J. Bacteriol.">
        <title>Whole-genome sequences of two Borrelia afzelii and two Borrelia garinii Lyme disease agent isolates.</title>
        <authorList>
            <person name="Casjens S.R."/>
            <person name="Mongodin E.F."/>
            <person name="Qiu W.G."/>
            <person name="Dunn J.J."/>
            <person name="Luft B.J."/>
            <person name="Fraser-Liggett C.M."/>
            <person name="Schutzer S.E."/>
        </authorList>
    </citation>
    <scope>NUCLEOTIDE SEQUENCE [LARGE SCALE GENOMIC DNA]</scope>
    <source>
        <strain>PKo</strain>
    </source>
</reference>
<evidence type="ECO:0000255" key="1">
    <source>
        <dbReference type="HAMAP-Rule" id="MF_00309"/>
    </source>
</evidence>
<evidence type="ECO:0000305" key="2"/>
<gene>
    <name evidence="1" type="primary">atpA</name>
    <name type="ordered locus">BAPKO_0095</name>
    <name type="ordered locus">BafPKo_0092</name>
</gene>
<organism>
    <name type="scientific">Borreliella afzelii (strain PKo)</name>
    <name type="common">Borrelia afzelii</name>
    <dbReference type="NCBI Taxonomy" id="390236"/>
    <lineage>
        <taxon>Bacteria</taxon>
        <taxon>Pseudomonadati</taxon>
        <taxon>Spirochaetota</taxon>
        <taxon>Spirochaetia</taxon>
        <taxon>Spirochaetales</taxon>
        <taxon>Borreliaceae</taxon>
        <taxon>Borreliella</taxon>
    </lineage>
</organism>
<protein>
    <recommendedName>
        <fullName evidence="1">V-type ATP synthase alpha chain</fullName>
        <ecNumber evidence="1">7.1.2.2</ecNumber>
    </recommendedName>
    <alternativeName>
        <fullName evidence="1">V-ATPase subunit A</fullName>
    </alternativeName>
</protein>
<feature type="chain" id="PRO_0000322459" description="V-type ATP synthase alpha chain">
    <location>
        <begin position="1"/>
        <end position="575"/>
    </location>
</feature>
<feature type="binding site" evidence="1">
    <location>
        <begin position="238"/>
        <end position="245"/>
    </location>
    <ligand>
        <name>ATP</name>
        <dbReference type="ChEBI" id="CHEBI:30616"/>
    </ligand>
</feature>
<accession>Q0SP70</accession>
<accession>G0IQT9</accession>
<comment type="function">
    <text evidence="1">Produces ATP from ADP in the presence of a proton gradient across the membrane. The V-type alpha chain is a catalytic subunit.</text>
</comment>
<comment type="catalytic activity">
    <reaction evidence="1">
        <text>ATP + H2O + 4 H(+)(in) = ADP + phosphate + 5 H(+)(out)</text>
        <dbReference type="Rhea" id="RHEA:57720"/>
        <dbReference type="ChEBI" id="CHEBI:15377"/>
        <dbReference type="ChEBI" id="CHEBI:15378"/>
        <dbReference type="ChEBI" id="CHEBI:30616"/>
        <dbReference type="ChEBI" id="CHEBI:43474"/>
        <dbReference type="ChEBI" id="CHEBI:456216"/>
        <dbReference type="EC" id="7.1.2.2"/>
    </reaction>
</comment>
<comment type="similarity">
    <text evidence="1">Belongs to the ATPase alpha/beta chains family.</text>
</comment>
<comment type="sequence caution" evidence="2">
    <conflict type="erroneous initiation">
        <sequence resource="EMBL-CDS" id="ABH01358"/>
    </conflict>
</comment>
<dbReference type="EC" id="7.1.2.2" evidence="1"/>
<dbReference type="EMBL" id="CP000395">
    <property type="protein sequence ID" value="ABH01358.1"/>
    <property type="status" value="ALT_INIT"/>
    <property type="molecule type" value="Genomic_DNA"/>
</dbReference>
<dbReference type="EMBL" id="CP002933">
    <property type="protein sequence ID" value="AEL69325.1"/>
    <property type="molecule type" value="Genomic_DNA"/>
</dbReference>
<dbReference type="RefSeq" id="WP_004790162.1">
    <property type="nucleotide sequence ID" value="NZ_CP160066.1"/>
</dbReference>
<dbReference type="SMR" id="Q0SP70"/>
<dbReference type="STRING" id="29518.BLA32_03820"/>
<dbReference type="KEGG" id="baf:BAPKO_0095"/>
<dbReference type="KEGG" id="bafz:BafPKo_0092"/>
<dbReference type="PATRIC" id="fig|390236.22.peg.91"/>
<dbReference type="eggNOG" id="COG1155">
    <property type="taxonomic scope" value="Bacteria"/>
</dbReference>
<dbReference type="HOGENOM" id="CLU_008162_1_1_12"/>
<dbReference type="OrthoDB" id="9803053at2"/>
<dbReference type="Proteomes" id="UP000005216">
    <property type="component" value="Chromosome"/>
</dbReference>
<dbReference type="GO" id="GO:0045259">
    <property type="term" value="C:proton-transporting ATP synthase complex"/>
    <property type="evidence" value="ECO:0007669"/>
    <property type="project" value="UniProtKB-ARBA"/>
</dbReference>
<dbReference type="GO" id="GO:0005524">
    <property type="term" value="F:ATP binding"/>
    <property type="evidence" value="ECO:0007669"/>
    <property type="project" value="UniProtKB-UniRule"/>
</dbReference>
<dbReference type="GO" id="GO:0046933">
    <property type="term" value="F:proton-transporting ATP synthase activity, rotational mechanism"/>
    <property type="evidence" value="ECO:0007669"/>
    <property type="project" value="UniProtKB-UniRule"/>
</dbReference>
<dbReference type="GO" id="GO:0046961">
    <property type="term" value="F:proton-transporting ATPase activity, rotational mechanism"/>
    <property type="evidence" value="ECO:0007669"/>
    <property type="project" value="InterPro"/>
</dbReference>
<dbReference type="GO" id="GO:0042777">
    <property type="term" value="P:proton motive force-driven plasma membrane ATP synthesis"/>
    <property type="evidence" value="ECO:0007669"/>
    <property type="project" value="UniProtKB-UniRule"/>
</dbReference>
<dbReference type="CDD" id="cd01426">
    <property type="entry name" value="ATP-synt_F1_V1_A1_AB_FliI_N"/>
    <property type="match status" value="1"/>
</dbReference>
<dbReference type="CDD" id="cd18111">
    <property type="entry name" value="ATP-synt_V_A-type_alpha_C"/>
    <property type="match status" value="1"/>
</dbReference>
<dbReference type="CDD" id="cd01134">
    <property type="entry name" value="V_A-ATPase_A"/>
    <property type="match status" value="1"/>
</dbReference>
<dbReference type="Gene3D" id="2.40.30.20">
    <property type="match status" value="1"/>
</dbReference>
<dbReference type="Gene3D" id="2.40.50.100">
    <property type="match status" value="1"/>
</dbReference>
<dbReference type="Gene3D" id="1.10.1140.10">
    <property type="entry name" value="Bovine Mitochondrial F1-atpase, Atp Synthase Beta Chain, Chain D, domain 3"/>
    <property type="match status" value="1"/>
</dbReference>
<dbReference type="Gene3D" id="3.40.50.300">
    <property type="entry name" value="P-loop containing nucleotide triphosphate hydrolases"/>
    <property type="match status" value="1"/>
</dbReference>
<dbReference type="HAMAP" id="MF_00309">
    <property type="entry name" value="ATP_synth_A_arch"/>
    <property type="match status" value="1"/>
</dbReference>
<dbReference type="InterPro" id="IPR055190">
    <property type="entry name" value="ATP-synt_VA_C"/>
</dbReference>
<dbReference type="InterPro" id="IPR031686">
    <property type="entry name" value="ATP-synth_a_Xtn"/>
</dbReference>
<dbReference type="InterPro" id="IPR023366">
    <property type="entry name" value="ATP_synth_asu-like_sf"/>
</dbReference>
<dbReference type="InterPro" id="IPR004100">
    <property type="entry name" value="ATPase_F1/V1/A1_a/bsu_N"/>
</dbReference>
<dbReference type="InterPro" id="IPR036121">
    <property type="entry name" value="ATPase_F1/V1/A1_a/bsu_N_sf"/>
</dbReference>
<dbReference type="InterPro" id="IPR000194">
    <property type="entry name" value="ATPase_F1/V1/A1_a/bsu_nucl-bd"/>
</dbReference>
<dbReference type="InterPro" id="IPR024034">
    <property type="entry name" value="ATPase_F1/V1_b/a_C"/>
</dbReference>
<dbReference type="InterPro" id="IPR027417">
    <property type="entry name" value="P-loop_NTPase"/>
</dbReference>
<dbReference type="InterPro" id="IPR022878">
    <property type="entry name" value="V-ATPase_asu"/>
</dbReference>
<dbReference type="NCBIfam" id="NF003220">
    <property type="entry name" value="PRK04192.1"/>
    <property type="match status" value="1"/>
</dbReference>
<dbReference type="PANTHER" id="PTHR43607:SF1">
    <property type="entry name" value="H(+)-TRANSPORTING TWO-SECTOR ATPASE"/>
    <property type="match status" value="1"/>
</dbReference>
<dbReference type="PANTHER" id="PTHR43607">
    <property type="entry name" value="V-TYPE PROTON ATPASE CATALYTIC SUBUNIT A"/>
    <property type="match status" value="1"/>
</dbReference>
<dbReference type="Pfam" id="PF00006">
    <property type="entry name" value="ATP-synt_ab"/>
    <property type="match status" value="1"/>
</dbReference>
<dbReference type="Pfam" id="PF02874">
    <property type="entry name" value="ATP-synt_ab_N"/>
    <property type="match status" value="1"/>
</dbReference>
<dbReference type="Pfam" id="PF16886">
    <property type="entry name" value="ATP-synt_ab_Xtn"/>
    <property type="match status" value="1"/>
</dbReference>
<dbReference type="Pfam" id="PF22919">
    <property type="entry name" value="ATP-synt_VA_C"/>
    <property type="match status" value="1"/>
</dbReference>
<dbReference type="SUPFAM" id="SSF47917">
    <property type="entry name" value="C-terminal domain of alpha and beta subunits of F1 ATP synthase"/>
    <property type="match status" value="1"/>
</dbReference>
<dbReference type="SUPFAM" id="SSF50615">
    <property type="entry name" value="N-terminal domain of alpha and beta subunits of F1 ATP synthase"/>
    <property type="match status" value="1"/>
</dbReference>
<dbReference type="SUPFAM" id="SSF52540">
    <property type="entry name" value="P-loop containing nucleoside triphosphate hydrolases"/>
    <property type="match status" value="1"/>
</dbReference>